<protein>
    <recommendedName>
        <fullName evidence="5">Beta-toxin ChFII.7</fullName>
    </recommendedName>
</protein>
<reference evidence="6" key="1">
    <citation type="submission" date="2024-06" db="UniProtKB">
        <title>Beta toxins isolated from Centruroides hirsutipalpus affect the sodium channel activation and promote spontaneous and repetitive firing.</title>
        <authorList>
            <person name="Valdez-Velazquez L."/>
            <person name="Olamendi-Portugal T."/>
            <person name="Possani L."/>
            <person name="Jimenez-Vargas J."/>
        </authorList>
    </citation>
    <scope>PROTEIN SEQUENCE</scope>
    <scope>SUBCELLULAR LOCATION</scope>
    <scope>TISSUE SPECIFICITY</scope>
    <scope>MASS SPECTROMETRY</scope>
</reference>
<comment type="function">
    <text evidence="2">Beta toxins bind voltage independently at site-4 of sodium channels (Nav) and shift the activation voltage toward more negative potentials, thereby affecting sodium channel activation CC and promoting spontaneous and repetitive firing.</text>
</comment>
<comment type="subcellular location">
    <subcellularLocation>
        <location evidence="4">Secreted</location>
    </subcellularLocation>
</comment>
<comment type="tissue specificity">
    <text evidence="7">Expressed by the venom gland.</text>
</comment>
<comment type="domain">
    <text evidence="6">Has the structural arrangement of an alpha-helix connected to antiparallel beta-sheets by disulfide bonds (CS-alpha/beta).</text>
</comment>
<comment type="mass spectrometry"/>
<comment type="similarity">
    <text evidence="6">Belongs to the long (4 C-C) scorpion toxin superfamily. Sodium channel inhibitor family. Beta subfamily.</text>
</comment>
<sequence>KEGYLVNHSTGCKYECFKLGDNDYCLRECRQQYGKGAGGYCYAFGCWCTHLYEQAVVWPLPKKTCN</sequence>
<feature type="chain" id="PRO_0000462139" description="Beta-toxin ChFII.7">
    <location>
        <begin position="1"/>
        <end position="66"/>
    </location>
</feature>
<feature type="domain" description="LCN-type CS-alpha/beta" evidence="3">
    <location>
        <begin position="1"/>
        <end position="66"/>
    </location>
</feature>
<feature type="modified residue" description="Asparagine amide" evidence="1">
    <location>
        <position position="66"/>
    </location>
</feature>
<feature type="disulfide bond" evidence="3">
    <location>
        <begin position="12"/>
        <end position="65"/>
    </location>
</feature>
<feature type="disulfide bond" evidence="3">
    <location>
        <begin position="16"/>
        <end position="41"/>
    </location>
</feature>
<feature type="disulfide bond" evidence="3">
    <location>
        <begin position="25"/>
        <end position="46"/>
    </location>
</feature>
<feature type="disulfide bond" evidence="3">
    <location>
        <begin position="29"/>
        <end position="48"/>
    </location>
</feature>
<evidence type="ECO:0000250" key="1">
    <source>
        <dbReference type="UniProtKB" id="C0HK69"/>
    </source>
</evidence>
<evidence type="ECO:0000250" key="2">
    <source>
        <dbReference type="UniProtKB" id="P60266"/>
    </source>
</evidence>
<evidence type="ECO:0000255" key="3">
    <source>
        <dbReference type="PROSITE-ProRule" id="PRU01210"/>
    </source>
</evidence>
<evidence type="ECO:0000269" key="4">
    <source ref="1"/>
</evidence>
<evidence type="ECO:0000303" key="5">
    <source ref="1"/>
</evidence>
<evidence type="ECO:0000305" key="6"/>
<evidence type="ECO:0000305" key="7">
    <source ref="1"/>
</evidence>
<accession>C0HMC5</accession>
<keyword id="KW-0027">Amidation</keyword>
<keyword id="KW-0903">Direct protein sequencing</keyword>
<keyword id="KW-1015">Disulfide bond</keyword>
<keyword id="KW-0872">Ion channel impairing toxin</keyword>
<keyword id="KW-0528">Neurotoxin</keyword>
<keyword id="KW-0964">Secreted</keyword>
<keyword id="KW-0800">Toxin</keyword>
<keyword id="KW-0738">Voltage-gated sodium channel impairing toxin</keyword>
<organism>
    <name type="scientific">Centruroides hirsutipalpus</name>
    <name type="common">Scorpion</name>
    <dbReference type="NCBI Taxonomy" id="2653061"/>
    <lineage>
        <taxon>Eukaryota</taxon>
        <taxon>Metazoa</taxon>
        <taxon>Ecdysozoa</taxon>
        <taxon>Arthropoda</taxon>
        <taxon>Chelicerata</taxon>
        <taxon>Arachnida</taxon>
        <taxon>Scorpiones</taxon>
        <taxon>Buthida</taxon>
        <taxon>Buthoidea</taxon>
        <taxon>Buthidae</taxon>
        <taxon>Centruroides</taxon>
    </lineage>
</organism>
<dbReference type="CDD" id="cd23106">
    <property type="entry name" value="neurotoxins_LC_scorpion"/>
    <property type="match status" value="1"/>
</dbReference>
<dbReference type="Gene3D" id="3.30.30.10">
    <property type="entry name" value="Knottin, scorpion toxin-like"/>
    <property type="match status" value="1"/>
</dbReference>
<dbReference type="InterPro" id="IPR044062">
    <property type="entry name" value="LCN-type_CS_alpha_beta_dom"/>
</dbReference>
<dbReference type="InterPro" id="IPR003614">
    <property type="entry name" value="Scorpion_toxin-like"/>
</dbReference>
<dbReference type="InterPro" id="IPR036574">
    <property type="entry name" value="Scorpion_toxin-like_sf"/>
</dbReference>
<dbReference type="InterPro" id="IPR018218">
    <property type="entry name" value="Scorpion_toxinL"/>
</dbReference>
<dbReference type="InterPro" id="IPR002061">
    <property type="entry name" value="Scorpion_toxinL/defensin"/>
</dbReference>
<dbReference type="Pfam" id="PF00537">
    <property type="entry name" value="Toxin_3"/>
    <property type="match status" value="1"/>
</dbReference>
<dbReference type="PRINTS" id="PR00285">
    <property type="entry name" value="SCORPNTOXIN"/>
</dbReference>
<dbReference type="SMART" id="SM00505">
    <property type="entry name" value="Knot1"/>
    <property type="match status" value="1"/>
</dbReference>
<dbReference type="SUPFAM" id="SSF57095">
    <property type="entry name" value="Scorpion toxin-like"/>
    <property type="match status" value="1"/>
</dbReference>
<dbReference type="PROSITE" id="PS51863">
    <property type="entry name" value="LCN_CSAB"/>
    <property type="match status" value="1"/>
</dbReference>
<name>SCX27_CENHI</name>
<proteinExistence type="evidence at protein level"/>